<protein>
    <recommendedName>
        <fullName>Olfactory receptor 5H15</fullName>
    </recommendedName>
</protein>
<dbReference type="EMBL" id="AC117460">
    <property type="status" value="NOT_ANNOTATED_CDS"/>
    <property type="molecule type" value="Genomic_DNA"/>
</dbReference>
<dbReference type="CCDS" id="CCDS33799.1"/>
<dbReference type="RefSeq" id="NP_001005515.1">
    <property type="nucleotide sequence ID" value="NM_001005515.2"/>
</dbReference>
<dbReference type="SMR" id="A6NDH6"/>
<dbReference type="FunCoup" id="A6NDH6">
    <property type="interactions" value="416"/>
</dbReference>
<dbReference type="STRING" id="9606.ENSP00000493082"/>
<dbReference type="GlyCosmos" id="A6NDH6">
    <property type="glycosylation" value="1 site, No reported glycans"/>
</dbReference>
<dbReference type="GlyGen" id="A6NDH6">
    <property type="glycosylation" value="1 site"/>
</dbReference>
<dbReference type="iPTMnet" id="A6NDH6"/>
<dbReference type="PhosphoSitePlus" id="A6NDH6"/>
<dbReference type="BioMuta" id="OR5H15"/>
<dbReference type="MassIVE" id="A6NDH6"/>
<dbReference type="PaxDb" id="9606-ENSP00000373195"/>
<dbReference type="PeptideAtlas" id="A6NDH6"/>
<dbReference type="Antibodypedia" id="58696">
    <property type="antibodies" value="48 antibodies from 16 providers"/>
</dbReference>
<dbReference type="DNASU" id="403274"/>
<dbReference type="Ensembl" id="ENST00000641450.1">
    <property type="protein sequence ID" value="ENSP00000493082.1"/>
    <property type="gene ID" value="ENSG00000233412.6"/>
</dbReference>
<dbReference type="GeneID" id="403274"/>
<dbReference type="KEGG" id="hsa:403274"/>
<dbReference type="MANE-Select" id="ENST00000641450.1">
    <property type="protein sequence ID" value="ENSP00000493082.1"/>
    <property type="RefSeq nucleotide sequence ID" value="NM_001005515.2"/>
    <property type="RefSeq protein sequence ID" value="NP_001005515.1"/>
</dbReference>
<dbReference type="UCSC" id="uc011bgu.2">
    <property type="organism name" value="human"/>
</dbReference>
<dbReference type="AGR" id="HGNC:31287"/>
<dbReference type="CTD" id="403274"/>
<dbReference type="GeneCards" id="OR5H15"/>
<dbReference type="HGNC" id="HGNC:31287">
    <property type="gene designation" value="OR5H15"/>
</dbReference>
<dbReference type="HPA" id="ENSG00000233412">
    <property type="expression patterns" value="Not detected"/>
</dbReference>
<dbReference type="neXtProt" id="NX_A6NDH6"/>
<dbReference type="PharmGKB" id="PA134956122"/>
<dbReference type="VEuPathDB" id="HostDB:ENSG00000233412"/>
<dbReference type="eggNOG" id="ENOG502T9JQ">
    <property type="taxonomic scope" value="Eukaryota"/>
</dbReference>
<dbReference type="GeneTree" id="ENSGT01120000271834"/>
<dbReference type="HOGENOM" id="CLU_012526_5_5_1"/>
<dbReference type="InParanoid" id="A6NDH6"/>
<dbReference type="OMA" id="LIAVTWK"/>
<dbReference type="OrthoDB" id="9615015at2759"/>
<dbReference type="PAN-GO" id="A6NDH6">
    <property type="GO annotations" value="2 GO annotations based on evolutionary models"/>
</dbReference>
<dbReference type="PhylomeDB" id="A6NDH6"/>
<dbReference type="TreeFam" id="TF352737"/>
<dbReference type="PathwayCommons" id="A6NDH6"/>
<dbReference type="Reactome" id="R-HSA-9752946">
    <property type="pathway name" value="Expression and translocation of olfactory receptors"/>
</dbReference>
<dbReference type="SignaLink" id="A6NDH6"/>
<dbReference type="BioGRID-ORCS" id="403274">
    <property type="hits" value="8 hits in 637 CRISPR screens"/>
</dbReference>
<dbReference type="GenomeRNAi" id="403274"/>
<dbReference type="Pharos" id="A6NDH6">
    <property type="development level" value="Tdark"/>
</dbReference>
<dbReference type="PRO" id="PR:A6NDH6"/>
<dbReference type="Proteomes" id="UP000005640">
    <property type="component" value="Chromosome 3"/>
</dbReference>
<dbReference type="RNAct" id="A6NDH6">
    <property type="molecule type" value="protein"/>
</dbReference>
<dbReference type="ExpressionAtlas" id="A6NDH6">
    <property type="expression patterns" value="baseline and differential"/>
</dbReference>
<dbReference type="GO" id="GO:0005886">
    <property type="term" value="C:plasma membrane"/>
    <property type="evidence" value="ECO:0007669"/>
    <property type="project" value="UniProtKB-SubCell"/>
</dbReference>
<dbReference type="GO" id="GO:0004930">
    <property type="term" value="F:G protein-coupled receptor activity"/>
    <property type="evidence" value="ECO:0007669"/>
    <property type="project" value="UniProtKB-KW"/>
</dbReference>
<dbReference type="GO" id="GO:0005549">
    <property type="term" value="F:odorant binding"/>
    <property type="evidence" value="ECO:0000318"/>
    <property type="project" value="GO_Central"/>
</dbReference>
<dbReference type="GO" id="GO:0004984">
    <property type="term" value="F:olfactory receptor activity"/>
    <property type="evidence" value="ECO:0000318"/>
    <property type="project" value="GO_Central"/>
</dbReference>
<dbReference type="FunFam" id="1.20.1070.10:FF:000004">
    <property type="entry name" value="Olfactory receptor"/>
    <property type="match status" value="1"/>
</dbReference>
<dbReference type="Gene3D" id="1.20.1070.10">
    <property type="entry name" value="Rhodopsin 7-helix transmembrane proteins"/>
    <property type="match status" value="1"/>
</dbReference>
<dbReference type="InterPro" id="IPR000276">
    <property type="entry name" value="GPCR_Rhodpsn"/>
</dbReference>
<dbReference type="InterPro" id="IPR017452">
    <property type="entry name" value="GPCR_Rhodpsn_7TM"/>
</dbReference>
<dbReference type="InterPro" id="IPR000725">
    <property type="entry name" value="Olfact_rcpt"/>
</dbReference>
<dbReference type="PANTHER" id="PTHR48018">
    <property type="entry name" value="OLFACTORY RECEPTOR"/>
    <property type="match status" value="1"/>
</dbReference>
<dbReference type="Pfam" id="PF13853">
    <property type="entry name" value="7tm_4"/>
    <property type="match status" value="1"/>
</dbReference>
<dbReference type="PRINTS" id="PR00237">
    <property type="entry name" value="GPCRRHODOPSN"/>
</dbReference>
<dbReference type="PRINTS" id="PR00245">
    <property type="entry name" value="OLFACTORYR"/>
</dbReference>
<dbReference type="SUPFAM" id="SSF81321">
    <property type="entry name" value="Family A G protein-coupled receptor-like"/>
    <property type="match status" value="1"/>
</dbReference>
<dbReference type="PROSITE" id="PS00237">
    <property type="entry name" value="G_PROTEIN_RECEP_F1_1"/>
    <property type="match status" value="1"/>
</dbReference>
<dbReference type="PROSITE" id="PS50262">
    <property type="entry name" value="G_PROTEIN_RECEP_F1_2"/>
    <property type="match status" value="1"/>
</dbReference>
<gene>
    <name type="primary">OR5H15</name>
</gene>
<proteinExistence type="inferred from homology"/>
<organism>
    <name type="scientific">Homo sapiens</name>
    <name type="common">Human</name>
    <dbReference type="NCBI Taxonomy" id="9606"/>
    <lineage>
        <taxon>Eukaryota</taxon>
        <taxon>Metazoa</taxon>
        <taxon>Chordata</taxon>
        <taxon>Craniata</taxon>
        <taxon>Vertebrata</taxon>
        <taxon>Euteleostomi</taxon>
        <taxon>Mammalia</taxon>
        <taxon>Eutheria</taxon>
        <taxon>Euarchontoglires</taxon>
        <taxon>Primates</taxon>
        <taxon>Haplorrhini</taxon>
        <taxon>Catarrhini</taxon>
        <taxon>Hominidae</taxon>
        <taxon>Homo</taxon>
    </lineage>
</organism>
<reference key="1">
    <citation type="journal article" date="2006" name="Nature">
        <title>The DNA sequence, annotation and analysis of human chromosome 3.</title>
        <authorList>
            <person name="Muzny D.M."/>
            <person name="Scherer S.E."/>
            <person name="Kaul R."/>
            <person name="Wang J."/>
            <person name="Yu J."/>
            <person name="Sudbrak R."/>
            <person name="Buhay C.J."/>
            <person name="Chen R."/>
            <person name="Cree A."/>
            <person name="Ding Y."/>
            <person name="Dugan-Rocha S."/>
            <person name="Gill R."/>
            <person name="Gunaratne P."/>
            <person name="Harris R.A."/>
            <person name="Hawes A.C."/>
            <person name="Hernandez J."/>
            <person name="Hodgson A.V."/>
            <person name="Hume J."/>
            <person name="Jackson A."/>
            <person name="Khan Z.M."/>
            <person name="Kovar-Smith C."/>
            <person name="Lewis L.R."/>
            <person name="Lozado R.J."/>
            <person name="Metzker M.L."/>
            <person name="Milosavljevic A."/>
            <person name="Miner G.R."/>
            <person name="Morgan M.B."/>
            <person name="Nazareth L.V."/>
            <person name="Scott G."/>
            <person name="Sodergren E."/>
            <person name="Song X.-Z."/>
            <person name="Steffen D."/>
            <person name="Wei S."/>
            <person name="Wheeler D.A."/>
            <person name="Wright M.W."/>
            <person name="Worley K.C."/>
            <person name="Yuan Y."/>
            <person name="Zhang Z."/>
            <person name="Adams C.Q."/>
            <person name="Ansari-Lari M.A."/>
            <person name="Ayele M."/>
            <person name="Brown M.J."/>
            <person name="Chen G."/>
            <person name="Chen Z."/>
            <person name="Clendenning J."/>
            <person name="Clerc-Blankenburg K.P."/>
            <person name="Chen R."/>
            <person name="Chen Z."/>
            <person name="Davis C."/>
            <person name="Delgado O."/>
            <person name="Dinh H.H."/>
            <person name="Dong W."/>
            <person name="Draper H."/>
            <person name="Ernst S."/>
            <person name="Fu G."/>
            <person name="Gonzalez-Garay M.L."/>
            <person name="Garcia D.K."/>
            <person name="Gillett W."/>
            <person name="Gu J."/>
            <person name="Hao B."/>
            <person name="Haugen E."/>
            <person name="Havlak P."/>
            <person name="He X."/>
            <person name="Hennig S."/>
            <person name="Hu S."/>
            <person name="Huang W."/>
            <person name="Jackson L.R."/>
            <person name="Jacob L.S."/>
            <person name="Kelly S.H."/>
            <person name="Kube M."/>
            <person name="Levy R."/>
            <person name="Li Z."/>
            <person name="Liu B."/>
            <person name="Liu J."/>
            <person name="Liu W."/>
            <person name="Lu J."/>
            <person name="Maheshwari M."/>
            <person name="Nguyen B.-V."/>
            <person name="Okwuonu G.O."/>
            <person name="Palmeiri A."/>
            <person name="Pasternak S."/>
            <person name="Perez L.M."/>
            <person name="Phelps K.A."/>
            <person name="Plopper F.J."/>
            <person name="Qiang B."/>
            <person name="Raymond C."/>
            <person name="Rodriguez R."/>
            <person name="Saenphimmachak C."/>
            <person name="Santibanez J."/>
            <person name="Shen H."/>
            <person name="Shen Y."/>
            <person name="Subramanian S."/>
            <person name="Tabor P.E."/>
            <person name="Verduzco D."/>
            <person name="Waldron L."/>
            <person name="Wang J."/>
            <person name="Wang J."/>
            <person name="Wang Q."/>
            <person name="Williams G.A."/>
            <person name="Wong G.K.-S."/>
            <person name="Yao Z."/>
            <person name="Zhang J."/>
            <person name="Zhang X."/>
            <person name="Zhao G."/>
            <person name="Zhou J."/>
            <person name="Zhou Y."/>
            <person name="Nelson D."/>
            <person name="Lehrach H."/>
            <person name="Reinhardt R."/>
            <person name="Naylor S.L."/>
            <person name="Yang H."/>
            <person name="Olson M."/>
            <person name="Weinstock G."/>
            <person name="Gibbs R.A."/>
        </authorList>
    </citation>
    <scope>NUCLEOTIDE SEQUENCE [LARGE SCALE GENOMIC DNA]</scope>
</reference>
<evidence type="ECO:0000255" key="1"/>
<evidence type="ECO:0000255" key="2">
    <source>
        <dbReference type="PROSITE-ProRule" id="PRU00521"/>
    </source>
</evidence>
<evidence type="ECO:0000305" key="3"/>
<feature type="chain" id="PRO_0000310413" description="Olfactory receptor 5H15">
    <location>
        <begin position="1"/>
        <end position="313"/>
    </location>
</feature>
<feature type="topological domain" description="Extracellular" evidence="1">
    <location>
        <begin position="1"/>
        <end position="28"/>
    </location>
</feature>
<feature type="transmembrane region" description="Helical; Name=1" evidence="1">
    <location>
        <begin position="29"/>
        <end position="49"/>
    </location>
</feature>
<feature type="topological domain" description="Cytoplasmic" evidence="1">
    <location>
        <begin position="50"/>
        <end position="56"/>
    </location>
</feature>
<feature type="transmembrane region" description="Helical; Name=2" evidence="1">
    <location>
        <begin position="57"/>
        <end position="77"/>
    </location>
</feature>
<feature type="topological domain" description="Extracellular" evidence="1">
    <location>
        <begin position="78"/>
        <end position="98"/>
    </location>
</feature>
<feature type="transmembrane region" description="Helical; Name=3" evidence="1">
    <location>
        <begin position="99"/>
        <end position="119"/>
    </location>
</feature>
<feature type="topological domain" description="Cytoplasmic" evidence="1">
    <location>
        <begin position="120"/>
        <end position="143"/>
    </location>
</feature>
<feature type="transmembrane region" description="Helical; Name=4" evidence="1">
    <location>
        <begin position="144"/>
        <end position="164"/>
    </location>
</feature>
<feature type="topological domain" description="Extracellular" evidence="1">
    <location>
        <begin position="165"/>
        <end position="195"/>
    </location>
</feature>
<feature type="transmembrane region" description="Helical; Name=5" evidence="1">
    <location>
        <begin position="196"/>
        <end position="216"/>
    </location>
</feature>
<feature type="topological domain" description="Cytoplasmic" evidence="1">
    <location>
        <begin position="217"/>
        <end position="240"/>
    </location>
</feature>
<feature type="transmembrane region" description="Helical; Name=6" evidence="1">
    <location>
        <begin position="241"/>
        <end position="261"/>
    </location>
</feature>
<feature type="topological domain" description="Extracellular" evidence="1">
    <location>
        <begin position="262"/>
        <end position="271"/>
    </location>
</feature>
<feature type="transmembrane region" description="Helical; Name=7" evidence="1">
    <location>
        <begin position="272"/>
        <end position="292"/>
    </location>
</feature>
<feature type="topological domain" description="Cytoplasmic" evidence="1">
    <location>
        <begin position="293"/>
        <end position="313"/>
    </location>
</feature>
<feature type="glycosylation site" description="N-linked (GlcNAc...) asparagine" evidence="1">
    <location>
        <position position="5"/>
    </location>
</feature>
<feature type="disulfide bond" evidence="2">
    <location>
        <begin position="97"/>
        <end position="179"/>
    </location>
</feature>
<feature type="sequence variant" id="VAR_037027" description="In dbSNP:rs4133320.">
    <original>V</original>
    <variation>I</variation>
    <location>
        <position position="108"/>
    </location>
</feature>
<feature type="sequence variant" id="VAR_037028" description="In dbSNP:rs4133321.">
    <original>S</original>
    <variation>T</variation>
    <location>
        <position position="148"/>
    </location>
</feature>
<feature type="sequence variant" id="VAR_037029" description="In dbSNP:rs4133322.">
    <original>T</original>
    <variation>S</variation>
    <location>
        <position position="167"/>
    </location>
</feature>
<accession>A6NDH6</accession>
<sequence>MEEENATLLTEFVLTGFLYQPQWKIPLFLAFLVIYLITIMGNLGLIAVIWKDPHLHIPMYLLLGNLAFVDAWISSTVTPKMLNNFLAKSKMISLSECKIQFFSIAIGVTTECFLLATMAYDRYVAICKPLLYPAIMTNGLCIRLLILSYIAGILHALIHEGFLFRLTFCNSNIVHHIYCDTIPLSKISCTDSSINFLMVFIFSGSIQVFSIVTILISYTFVLFTVLEKKSDKGVRKAFSTCGAHLFSVCLYYGPLLLMYVGPASPQADGQNMVEPLFYTVIIPLLNPIIYSLRNKQVIVSFIKMLKRNVKVSY</sequence>
<name>O5H15_HUMAN</name>
<comment type="function">
    <text evidence="3">Odorant receptor.</text>
</comment>
<comment type="subcellular location">
    <subcellularLocation>
        <location>Cell membrane</location>
        <topology>Multi-pass membrane protein</topology>
    </subcellularLocation>
</comment>
<comment type="similarity">
    <text evidence="2">Belongs to the G-protein coupled receptor 1 family.</text>
</comment>
<comment type="online information" name="Human Olfactory Receptor Data Exploratorium (HORDE)">
    <link uri="http://genome.weizmann.ac.il/horde/card/index/symbol:OR5H15"/>
</comment>
<keyword id="KW-1003">Cell membrane</keyword>
<keyword id="KW-1015">Disulfide bond</keyword>
<keyword id="KW-0297">G-protein coupled receptor</keyword>
<keyword id="KW-0325">Glycoprotein</keyword>
<keyword id="KW-0472">Membrane</keyword>
<keyword id="KW-0552">Olfaction</keyword>
<keyword id="KW-0675">Receptor</keyword>
<keyword id="KW-1185">Reference proteome</keyword>
<keyword id="KW-0716">Sensory transduction</keyword>
<keyword id="KW-0807">Transducer</keyword>
<keyword id="KW-0812">Transmembrane</keyword>
<keyword id="KW-1133">Transmembrane helix</keyword>